<accession>P15342</accession>
<sequence>ARTTAGSYRRYRRRCCSPRRLYRLRRRRYRSSRRRRRRPCRRRRHRRVCRRVRRRRRCCRRR</sequence>
<feature type="chain" id="PRO_0000191596" description="Sperm histone P2a">
    <location>
        <begin position="1"/>
        <end position="62"/>
    </location>
</feature>
<name>PRM2_HORSE</name>
<reference key="1">
    <citation type="journal article" date="1990" name="Biochim. Biophys. Acta">
        <title>Primary structures of two protamine 2 variants (St2a and St2b) from stallion spermatozoa.</title>
        <authorList>
            <person name="Pirhonen A."/>
            <person name="Valtonen P."/>
            <person name="Linnala-Kankkunen A."/>
            <person name="Heiskanen M.-L."/>
            <person name="Maenpaa P.K."/>
        </authorList>
    </citation>
    <scope>PROTEIN SEQUENCE</scope>
</reference>
<reference key="2">
    <citation type="journal article" date="1989" name="FEBS Lett.">
        <title>Comparison of partial amino acid sequences of two protamine 2 variants from stallion sperm. Structural evidence that the variants are products of different genes.</title>
        <authorList>
            <person name="Pirhonen A."/>
            <person name="Linnala-Kankkunen A."/>
            <person name="Maenpaa P.K."/>
        </authorList>
    </citation>
    <scope>PROTEIN SEQUENCE OF 1-25</scope>
</reference>
<comment type="function">
    <text evidence="1">Protamines substitute for histones in the chromatin of sperm during the haploid phase of spermatogenesis. They compact sperm DNA into a highly condensed, stable and inactive complex.</text>
</comment>
<comment type="subcellular location">
    <subcellularLocation>
        <location evidence="1">Nucleus</location>
    </subcellularLocation>
    <subcellularLocation>
        <location evidence="1">Chromosome</location>
    </subcellularLocation>
</comment>
<comment type="tissue specificity">
    <text>Testis.</text>
</comment>
<comment type="PTM">
    <text evidence="1">Proteolytic processing into mature chains is required for histone eviction during spermatogenesis. Transition proteins (TNP1 and TNP2) are required for processing.</text>
</comment>
<comment type="similarity">
    <text evidence="2">Belongs to the protamine P2 family.</text>
</comment>
<dbReference type="PIR" id="S10754">
    <property type="entry name" value="S10754"/>
</dbReference>
<dbReference type="InParanoid" id="P15342"/>
<dbReference type="Proteomes" id="UP000002281">
    <property type="component" value="Unplaced"/>
</dbReference>
<dbReference type="GO" id="GO:0000786">
    <property type="term" value="C:nucleosome"/>
    <property type="evidence" value="ECO:0007669"/>
    <property type="project" value="UniProtKB-KW"/>
</dbReference>
<dbReference type="GO" id="GO:0005634">
    <property type="term" value="C:nucleus"/>
    <property type="evidence" value="ECO:0007669"/>
    <property type="project" value="UniProtKB-SubCell"/>
</dbReference>
<dbReference type="GO" id="GO:0003677">
    <property type="term" value="F:DNA binding"/>
    <property type="evidence" value="ECO:0007669"/>
    <property type="project" value="UniProtKB-KW"/>
</dbReference>
<dbReference type="GO" id="GO:0030154">
    <property type="term" value="P:cell differentiation"/>
    <property type="evidence" value="ECO:0007669"/>
    <property type="project" value="UniProtKB-KW"/>
</dbReference>
<dbReference type="GO" id="GO:0030261">
    <property type="term" value="P:chromosome condensation"/>
    <property type="evidence" value="ECO:0007669"/>
    <property type="project" value="UniProtKB-KW"/>
</dbReference>
<dbReference type="GO" id="GO:0007283">
    <property type="term" value="P:spermatogenesis"/>
    <property type="evidence" value="ECO:0000250"/>
    <property type="project" value="UniProtKB"/>
</dbReference>
<protein>
    <recommendedName>
        <fullName>Sperm histone P2a</fullName>
    </recommendedName>
    <alternativeName>
        <fullName>Protamine 2a</fullName>
    </alternativeName>
    <alternativeName>
        <fullName>ST2a</fullName>
    </alternativeName>
</protein>
<organism>
    <name type="scientific">Equus caballus</name>
    <name type="common">Horse</name>
    <dbReference type="NCBI Taxonomy" id="9796"/>
    <lineage>
        <taxon>Eukaryota</taxon>
        <taxon>Metazoa</taxon>
        <taxon>Chordata</taxon>
        <taxon>Craniata</taxon>
        <taxon>Vertebrata</taxon>
        <taxon>Euteleostomi</taxon>
        <taxon>Mammalia</taxon>
        <taxon>Eutheria</taxon>
        <taxon>Laurasiatheria</taxon>
        <taxon>Perissodactyla</taxon>
        <taxon>Equidae</taxon>
        <taxon>Equus</taxon>
    </lineage>
</organism>
<keyword id="KW-0158">Chromosome</keyword>
<keyword id="KW-0217">Developmental protein</keyword>
<keyword id="KW-0221">Differentiation</keyword>
<keyword id="KW-0903">Direct protein sequencing</keyword>
<keyword id="KW-0226">DNA condensation</keyword>
<keyword id="KW-0238">DNA-binding</keyword>
<keyword id="KW-0544">Nucleosome core</keyword>
<keyword id="KW-0539">Nucleus</keyword>
<keyword id="KW-1185">Reference proteome</keyword>
<keyword id="KW-0744">Spermatogenesis</keyword>
<proteinExistence type="evidence at protein level"/>
<evidence type="ECO:0000250" key="1">
    <source>
        <dbReference type="UniProtKB" id="P07978"/>
    </source>
</evidence>
<evidence type="ECO:0000305" key="2"/>